<keyword id="KW-0963">Cytoplasm</keyword>
<keyword id="KW-0489">Methyltransferase</keyword>
<keyword id="KW-1185">Reference proteome</keyword>
<keyword id="KW-0698">rRNA processing</keyword>
<keyword id="KW-0949">S-adenosyl-L-methionine</keyword>
<keyword id="KW-0808">Transferase</keyword>
<proteinExistence type="inferred from homology"/>
<protein>
    <recommendedName>
        <fullName evidence="1">Ribosomal RNA small subunit methyltransferase G</fullName>
        <ecNumber evidence="1">2.1.1.170</ecNumber>
    </recommendedName>
    <alternativeName>
        <fullName evidence="1">16S rRNA 7-methylguanosine methyltransferase</fullName>
        <shortName evidence="1">16S rRNA m7G methyltransferase</shortName>
    </alternativeName>
</protein>
<organism>
    <name type="scientific">Haemophilus influenzae (strain ATCC 51907 / DSM 11121 / KW20 / Rd)</name>
    <dbReference type="NCBI Taxonomy" id="71421"/>
    <lineage>
        <taxon>Bacteria</taxon>
        <taxon>Pseudomonadati</taxon>
        <taxon>Pseudomonadota</taxon>
        <taxon>Gammaproteobacteria</taxon>
        <taxon>Pasteurellales</taxon>
        <taxon>Pasteurellaceae</taxon>
        <taxon>Haemophilus</taxon>
    </lineage>
</organism>
<evidence type="ECO:0000255" key="1">
    <source>
        <dbReference type="HAMAP-Rule" id="MF_00074"/>
    </source>
</evidence>
<feature type="chain" id="PRO_0000184259" description="Ribosomal RNA small subunit methyltransferase G">
    <location>
        <begin position="1"/>
        <end position="203"/>
    </location>
</feature>
<feature type="binding site" evidence="1">
    <location>
        <position position="73"/>
    </location>
    <ligand>
        <name>S-adenosyl-L-methionine</name>
        <dbReference type="ChEBI" id="CHEBI:59789"/>
    </ligand>
</feature>
<feature type="binding site" evidence="1">
    <location>
        <position position="78"/>
    </location>
    <ligand>
        <name>S-adenosyl-L-methionine</name>
        <dbReference type="ChEBI" id="CHEBI:59789"/>
    </ligand>
</feature>
<feature type="binding site" evidence="1">
    <location>
        <begin position="124"/>
        <end position="125"/>
    </location>
    <ligand>
        <name>S-adenosyl-L-methionine</name>
        <dbReference type="ChEBI" id="CHEBI:59789"/>
    </ligand>
</feature>
<feature type="binding site" evidence="1">
    <location>
        <position position="139"/>
    </location>
    <ligand>
        <name>S-adenosyl-L-methionine</name>
        <dbReference type="ChEBI" id="CHEBI:59789"/>
    </ligand>
</feature>
<reference key="1">
    <citation type="journal article" date="1995" name="Science">
        <title>Whole-genome random sequencing and assembly of Haemophilus influenzae Rd.</title>
        <authorList>
            <person name="Fleischmann R.D."/>
            <person name="Adams M.D."/>
            <person name="White O."/>
            <person name="Clayton R.A."/>
            <person name="Kirkness E.F."/>
            <person name="Kerlavage A.R."/>
            <person name="Bult C.J."/>
            <person name="Tomb J.-F."/>
            <person name="Dougherty B.A."/>
            <person name="Merrick J.M."/>
            <person name="McKenney K."/>
            <person name="Sutton G.G."/>
            <person name="FitzHugh W."/>
            <person name="Fields C.A."/>
            <person name="Gocayne J.D."/>
            <person name="Scott J.D."/>
            <person name="Shirley R."/>
            <person name="Liu L.-I."/>
            <person name="Glodek A."/>
            <person name="Kelley J.M."/>
            <person name="Weidman J.F."/>
            <person name="Phillips C.A."/>
            <person name="Spriggs T."/>
            <person name="Hedblom E."/>
            <person name="Cotton M.D."/>
            <person name="Utterback T.R."/>
            <person name="Hanna M.C."/>
            <person name="Nguyen D.T."/>
            <person name="Saudek D.M."/>
            <person name="Brandon R.C."/>
            <person name="Fine L.D."/>
            <person name="Fritchman J.L."/>
            <person name="Fuhrmann J.L."/>
            <person name="Geoghagen N.S.M."/>
            <person name="Gnehm C.L."/>
            <person name="McDonald L.A."/>
            <person name="Small K.V."/>
            <person name="Fraser C.M."/>
            <person name="Smith H.O."/>
            <person name="Venter J.C."/>
        </authorList>
    </citation>
    <scope>NUCLEOTIDE SEQUENCE [LARGE SCALE GENOMIC DNA]</scope>
    <source>
        <strain>ATCC 51907 / DSM 11121 / KW20 / Rd</strain>
    </source>
</reference>
<sequence length="203" mass="23178">MKAKLVSLLAQANIKISDQQIQQLINLVNLLNKWNKAYNLTSVRDPQEMLVKHILDSLVVSPYLQGDRFIDVGTGPGLPGLPLAIINPSKQFVLLDSLGKRISFIRNAIRELRLTNVTPVLSRVEEYQPEDKFDGVLSRAFASLKDMTDWCHHLPKENGYFYALKGIYQEDEINELNKKYTIQKVIELSVPELIGERHLIVLR</sequence>
<accession>P44728</accession>
<name>RSMG_HAEIN</name>
<dbReference type="EC" id="2.1.1.170" evidence="1"/>
<dbReference type="EMBL" id="L42023">
    <property type="protein sequence ID" value="AAC22146.1"/>
    <property type="molecule type" value="Genomic_DNA"/>
</dbReference>
<dbReference type="PIR" id="B64072">
    <property type="entry name" value="B64072"/>
</dbReference>
<dbReference type="RefSeq" id="NP_438647.1">
    <property type="nucleotide sequence ID" value="NC_000907.1"/>
</dbReference>
<dbReference type="SMR" id="P44728"/>
<dbReference type="STRING" id="71421.HI_0486"/>
<dbReference type="EnsemblBacteria" id="AAC22146">
    <property type="protein sequence ID" value="AAC22146"/>
    <property type="gene ID" value="HI_0486"/>
</dbReference>
<dbReference type="KEGG" id="hin:HI_0486"/>
<dbReference type="PATRIC" id="fig|71421.8.peg.506"/>
<dbReference type="eggNOG" id="COG0357">
    <property type="taxonomic scope" value="Bacteria"/>
</dbReference>
<dbReference type="HOGENOM" id="CLU_065341_2_2_6"/>
<dbReference type="OrthoDB" id="9808773at2"/>
<dbReference type="PhylomeDB" id="P44728"/>
<dbReference type="BioCyc" id="HINF71421:G1GJ1-502-MONOMER"/>
<dbReference type="Proteomes" id="UP000000579">
    <property type="component" value="Chromosome"/>
</dbReference>
<dbReference type="GO" id="GO:0005829">
    <property type="term" value="C:cytosol"/>
    <property type="evidence" value="ECO:0000318"/>
    <property type="project" value="GO_Central"/>
</dbReference>
<dbReference type="GO" id="GO:0070043">
    <property type="term" value="F:rRNA (guanine-N7-)-methyltransferase activity"/>
    <property type="evidence" value="ECO:0000318"/>
    <property type="project" value="GO_Central"/>
</dbReference>
<dbReference type="CDD" id="cd02440">
    <property type="entry name" value="AdoMet_MTases"/>
    <property type="match status" value="1"/>
</dbReference>
<dbReference type="FunFam" id="3.40.50.150:FF:000032">
    <property type="entry name" value="Ribosomal RNA small subunit methyltransferase G"/>
    <property type="match status" value="1"/>
</dbReference>
<dbReference type="Gene3D" id="3.40.50.150">
    <property type="entry name" value="Vaccinia Virus protein VP39"/>
    <property type="match status" value="1"/>
</dbReference>
<dbReference type="HAMAP" id="MF_00074">
    <property type="entry name" value="16SrRNA_methyltr_G"/>
    <property type="match status" value="1"/>
</dbReference>
<dbReference type="InterPro" id="IPR003682">
    <property type="entry name" value="rRNA_ssu_MeTfrase_G"/>
</dbReference>
<dbReference type="InterPro" id="IPR029063">
    <property type="entry name" value="SAM-dependent_MTases_sf"/>
</dbReference>
<dbReference type="NCBIfam" id="TIGR00138">
    <property type="entry name" value="rsmG_gidB"/>
    <property type="match status" value="1"/>
</dbReference>
<dbReference type="PANTHER" id="PTHR31760">
    <property type="entry name" value="S-ADENOSYL-L-METHIONINE-DEPENDENT METHYLTRANSFERASES SUPERFAMILY PROTEIN"/>
    <property type="match status" value="1"/>
</dbReference>
<dbReference type="PANTHER" id="PTHR31760:SF0">
    <property type="entry name" value="S-ADENOSYL-L-METHIONINE-DEPENDENT METHYLTRANSFERASES SUPERFAMILY PROTEIN"/>
    <property type="match status" value="1"/>
</dbReference>
<dbReference type="Pfam" id="PF02527">
    <property type="entry name" value="GidB"/>
    <property type="match status" value="1"/>
</dbReference>
<dbReference type="PIRSF" id="PIRSF003078">
    <property type="entry name" value="GidB"/>
    <property type="match status" value="1"/>
</dbReference>
<dbReference type="SUPFAM" id="SSF53335">
    <property type="entry name" value="S-adenosyl-L-methionine-dependent methyltransferases"/>
    <property type="match status" value="1"/>
</dbReference>
<comment type="function">
    <text evidence="1">Specifically methylates the N7 position of guanine in position 527 of 16S rRNA.</text>
</comment>
<comment type="catalytic activity">
    <reaction evidence="1">
        <text>guanosine(527) in 16S rRNA + S-adenosyl-L-methionine = N(7)-methylguanosine(527) in 16S rRNA + S-adenosyl-L-homocysteine</text>
        <dbReference type="Rhea" id="RHEA:42732"/>
        <dbReference type="Rhea" id="RHEA-COMP:10209"/>
        <dbReference type="Rhea" id="RHEA-COMP:10210"/>
        <dbReference type="ChEBI" id="CHEBI:57856"/>
        <dbReference type="ChEBI" id="CHEBI:59789"/>
        <dbReference type="ChEBI" id="CHEBI:74269"/>
        <dbReference type="ChEBI" id="CHEBI:74480"/>
        <dbReference type="EC" id="2.1.1.170"/>
    </reaction>
</comment>
<comment type="subcellular location">
    <subcellularLocation>
        <location evidence="1">Cytoplasm</location>
    </subcellularLocation>
</comment>
<comment type="similarity">
    <text evidence="1">Belongs to the methyltransferase superfamily. RNA methyltransferase RsmG family.</text>
</comment>
<gene>
    <name evidence="1" type="primary">rsmG</name>
    <name type="ordered locus">HI_0486</name>
</gene>